<evidence type="ECO:0000255" key="1">
    <source>
        <dbReference type="HAMAP-Rule" id="MF_01591"/>
    </source>
</evidence>
<proteinExistence type="inferred from homology"/>
<feature type="chain" id="PRO_0000315010" description="Protein Ves">
    <location>
        <begin position="1"/>
        <end position="191"/>
    </location>
</feature>
<sequence>MEYFDMRKMSVNLWRNAAGETREICTFPPAKRDFYWRASIASIAANGEFSLFPGMERIVTLLEGGEMLLESADRFNHTLKPLQPFAFTADQVVKAKLTAGQMSMDFNIMTRLDVCKAKVRIAERTFTTFGSRGGVVFVINGAWQLGDKLLTTDQGVCWFDGRHTLRLLQPQGKLLFSEINWLAGHSPDQVQ</sequence>
<protein>
    <recommendedName>
        <fullName evidence="1">Protein Ves</fullName>
    </recommendedName>
</protein>
<organism>
    <name type="scientific">Shigella flexneri</name>
    <dbReference type="NCBI Taxonomy" id="623"/>
    <lineage>
        <taxon>Bacteria</taxon>
        <taxon>Pseudomonadati</taxon>
        <taxon>Pseudomonadota</taxon>
        <taxon>Gammaproteobacteria</taxon>
        <taxon>Enterobacterales</taxon>
        <taxon>Enterobacteriaceae</taxon>
        <taxon>Shigella</taxon>
    </lineage>
</organism>
<keyword id="KW-1185">Reference proteome</keyword>
<gene>
    <name evidence="1" type="primary">ves</name>
    <name type="ordered locus">SF1484</name>
    <name type="ordered locus">S1601</name>
</gene>
<name>VES_SHIFL</name>
<accession>Q83L49</accession>
<accession>Q7UCI5</accession>
<comment type="similarity">
    <text evidence="1">Belongs to the Ves family.</text>
</comment>
<dbReference type="EMBL" id="AE005674">
    <property type="protein sequence ID" value="AAN43076.2"/>
    <property type="molecule type" value="Genomic_DNA"/>
</dbReference>
<dbReference type="EMBL" id="AE014073">
    <property type="protein sequence ID" value="AAP16969.1"/>
    <property type="molecule type" value="Genomic_DNA"/>
</dbReference>
<dbReference type="RefSeq" id="NP_707369.2">
    <property type="nucleotide sequence ID" value="NC_004337.2"/>
</dbReference>
<dbReference type="RefSeq" id="WP_005084340.1">
    <property type="nucleotide sequence ID" value="NZ_WPGW01000081.1"/>
</dbReference>
<dbReference type="SMR" id="Q83L49"/>
<dbReference type="STRING" id="198214.SF1484"/>
<dbReference type="PaxDb" id="198214-SF1484"/>
<dbReference type="GeneID" id="1024695"/>
<dbReference type="KEGG" id="sfl:SF1484"/>
<dbReference type="KEGG" id="sfx:S1601"/>
<dbReference type="PATRIC" id="fig|198214.7.peg.1752"/>
<dbReference type="HOGENOM" id="CLU_090931_5_0_6"/>
<dbReference type="Proteomes" id="UP000001006">
    <property type="component" value="Chromosome"/>
</dbReference>
<dbReference type="Proteomes" id="UP000002673">
    <property type="component" value="Chromosome"/>
</dbReference>
<dbReference type="CDD" id="cd20293">
    <property type="entry name" value="cupin_HutD_N"/>
    <property type="match status" value="1"/>
</dbReference>
<dbReference type="Gene3D" id="2.60.120.10">
    <property type="entry name" value="Jelly Rolls"/>
    <property type="match status" value="1"/>
</dbReference>
<dbReference type="HAMAP" id="MF_01591">
    <property type="entry name" value="Ves"/>
    <property type="match status" value="1"/>
</dbReference>
<dbReference type="InterPro" id="IPR014710">
    <property type="entry name" value="RmlC-like_jellyroll"/>
</dbReference>
<dbReference type="InterPro" id="IPR011051">
    <property type="entry name" value="RmlC_Cupin_sf"/>
</dbReference>
<dbReference type="InterPro" id="IPR010282">
    <property type="entry name" value="Uncharacterised_HutD/Ves"/>
</dbReference>
<dbReference type="InterPro" id="IPR023482">
    <property type="entry name" value="Uncharacterised_Ves"/>
</dbReference>
<dbReference type="NCBIfam" id="NF008488">
    <property type="entry name" value="PRK11396.1"/>
    <property type="match status" value="1"/>
</dbReference>
<dbReference type="PANTHER" id="PTHR37943">
    <property type="entry name" value="PROTEIN VES"/>
    <property type="match status" value="1"/>
</dbReference>
<dbReference type="PANTHER" id="PTHR37943:SF1">
    <property type="entry name" value="PROTEIN VES"/>
    <property type="match status" value="1"/>
</dbReference>
<dbReference type="Pfam" id="PF05962">
    <property type="entry name" value="HutD"/>
    <property type="match status" value="1"/>
</dbReference>
<dbReference type="SUPFAM" id="SSF51182">
    <property type="entry name" value="RmlC-like cupins"/>
    <property type="match status" value="1"/>
</dbReference>
<reference key="1">
    <citation type="journal article" date="2002" name="Nucleic Acids Res.">
        <title>Genome sequence of Shigella flexneri 2a: insights into pathogenicity through comparison with genomes of Escherichia coli K12 and O157.</title>
        <authorList>
            <person name="Jin Q."/>
            <person name="Yuan Z."/>
            <person name="Xu J."/>
            <person name="Wang Y."/>
            <person name="Shen Y."/>
            <person name="Lu W."/>
            <person name="Wang J."/>
            <person name="Liu H."/>
            <person name="Yang J."/>
            <person name="Yang F."/>
            <person name="Zhang X."/>
            <person name="Zhang J."/>
            <person name="Yang G."/>
            <person name="Wu H."/>
            <person name="Qu D."/>
            <person name="Dong J."/>
            <person name="Sun L."/>
            <person name="Xue Y."/>
            <person name="Zhao A."/>
            <person name="Gao Y."/>
            <person name="Zhu J."/>
            <person name="Kan B."/>
            <person name="Ding K."/>
            <person name="Chen S."/>
            <person name="Cheng H."/>
            <person name="Yao Z."/>
            <person name="He B."/>
            <person name="Chen R."/>
            <person name="Ma D."/>
            <person name="Qiang B."/>
            <person name="Wen Y."/>
            <person name="Hou Y."/>
            <person name="Yu J."/>
        </authorList>
    </citation>
    <scope>NUCLEOTIDE SEQUENCE [LARGE SCALE GENOMIC DNA]</scope>
    <source>
        <strain>301 / Serotype 2a</strain>
    </source>
</reference>
<reference key="2">
    <citation type="journal article" date="2003" name="Infect. Immun.">
        <title>Complete genome sequence and comparative genomics of Shigella flexneri serotype 2a strain 2457T.</title>
        <authorList>
            <person name="Wei J."/>
            <person name="Goldberg M.B."/>
            <person name="Burland V."/>
            <person name="Venkatesan M.M."/>
            <person name="Deng W."/>
            <person name="Fournier G."/>
            <person name="Mayhew G.F."/>
            <person name="Plunkett G. III"/>
            <person name="Rose D.J."/>
            <person name="Darling A."/>
            <person name="Mau B."/>
            <person name="Perna N.T."/>
            <person name="Payne S.M."/>
            <person name="Runyen-Janecky L.J."/>
            <person name="Zhou S."/>
            <person name="Schwartz D.C."/>
            <person name="Blattner F.R."/>
        </authorList>
    </citation>
    <scope>NUCLEOTIDE SEQUENCE [LARGE SCALE GENOMIC DNA]</scope>
    <source>
        <strain>ATCC 700930 / 2457T / Serotype 2a</strain>
    </source>
</reference>